<gene>
    <name type="primary">bioF</name>
    <name type="ordered locus">BCE_4187</name>
</gene>
<reference key="1">
    <citation type="journal article" date="2004" name="Nucleic Acids Res.">
        <title>The genome sequence of Bacillus cereus ATCC 10987 reveals metabolic adaptations and a large plasmid related to Bacillus anthracis pXO1.</title>
        <authorList>
            <person name="Rasko D.A."/>
            <person name="Ravel J."/>
            <person name="Oekstad O.A."/>
            <person name="Helgason E."/>
            <person name="Cer R.Z."/>
            <person name="Jiang L."/>
            <person name="Shores K.A."/>
            <person name="Fouts D.E."/>
            <person name="Tourasse N.J."/>
            <person name="Angiuoli S.V."/>
            <person name="Kolonay J.F."/>
            <person name="Nelson W.C."/>
            <person name="Kolstoe A.-B."/>
            <person name="Fraser C.M."/>
            <person name="Read T.D."/>
        </authorList>
    </citation>
    <scope>NUCLEOTIDE SEQUENCE [LARGE SCALE GENOMIC DNA]</scope>
    <source>
        <strain>ATCC 10987 / NRS 248</strain>
    </source>
</reference>
<evidence type="ECO:0000250" key="1"/>
<evidence type="ECO:0000305" key="2"/>
<feature type="chain" id="PRO_0000380908" description="Putative 8-amino-7-oxononanoate synthase">
    <location>
        <begin position="1"/>
        <end position="395"/>
    </location>
</feature>
<feature type="binding site" evidence="1">
    <location>
        <position position="23"/>
    </location>
    <ligand>
        <name>substrate</name>
    </ligand>
</feature>
<feature type="binding site" evidence="1">
    <location>
        <begin position="110"/>
        <end position="111"/>
    </location>
    <ligand>
        <name>pyridoxal 5'-phosphate</name>
        <dbReference type="ChEBI" id="CHEBI:597326"/>
    </ligand>
</feature>
<feature type="binding site" evidence="1">
    <location>
        <position position="135"/>
    </location>
    <ligand>
        <name>substrate</name>
    </ligand>
</feature>
<feature type="binding site" evidence="1">
    <location>
        <position position="182"/>
    </location>
    <ligand>
        <name>pyridoxal 5'-phosphate</name>
        <dbReference type="ChEBI" id="CHEBI:597326"/>
    </ligand>
</feature>
<feature type="binding site" evidence="1">
    <location>
        <begin position="207"/>
        <end position="210"/>
    </location>
    <ligand>
        <name>pyridoxal 5'-phosphate</name>
        <dbReference type="ChEBI" id="CHEBI:597326"/>
    </ligand>
</feature>
<feature type="binding site" evidence="1">
    <location>
        <begin position="239"/>
        <end position="242"/>
    </location>
    <ligand>
        <name>pyridoxal 5'-phosphate</name>
        <dbReference type="ChEBI" id="CHEBI:597326"/>
    </ligand>
</feature>
<feature type="binding site" evidence="1">
    <location>
        <position position="356"/>
    </location>
    <ligand>
        <name>substrate</name>
    </ligand>
</feature>
<feature type="modified residue" description="N6-(pyridoxal phosphate)lysine" evidence="1">
    <location>
        <position position="242"/>
    </location>
</feature>
<protein>
    <recommendedName>
        <fullName>Putative 8-amino-7-oxononanoate synthase</fullName>
        <shortName>AONS</shortName>
        <ecNumber>2.3.1.47</ecNumber>
    </recommendedName>
    <alternativeName>
        <fullName>7-keto-8-amino-pelargonic acid synthase</fullName>
        <shortName>7-KAP synthase</shortName>
    </alternativeName>
    <alternativeName>
        <fullName>8-amino-7-ketopelargonate synthase</fullName>
    </alternativeName>
</protein>
<sequence>MNQTWRTHLQSKLQQLHERGQYRNLHVTEQAEETWLIRDEKRMLNLASNNYLGLAGDERLKEAAIACTRKYGTGATASRLVVGNYSLYEEVERSICDWKGTEKALVVNSGYTANIGVISSLVSRHDIVFSDKLNHASIVDGIILSGAEHKRYRHNDLDHLEKLLKTASPEQRKLIVTDTVFSMDGDTAYVRELVELKEKYGAILIVDEAHASGIYGSGGAGLSHIEEDLAQKIDIHMGTFSKALGCYGAYLTGDAIYIEYLHNMMRSFIFTTALPPGTLGAVQKAIEIVKEDNERRERLIENGAYFRNHLREAGFDIGNSSTHIVPIVVGSNETALRFSKRLQQVGIAAIAIRPPTVPVNSSRVRFAVTSQHTIADLQWAIHHIIRIGKEEGFFV</sequence>
<comment type="function">
    <text evidence="1">Catalyzes the decarboxylative condensation of pimeloyl-[acyl-carrier protein] and L-alanine to produce 8-amino-7-oxononanoate (AON), [acyl-carrier protein], and carbon dioxide.</text>
</comment>
<comment type="catalytic activity">
    <reaction>
        <text>6-carboxyhexanoyl-[ACP] + L-alanine + H(+) = (8S)-8-amino-7-oxononanoate + holo-[ACP] + CO2</text>
        <dbReference type="Rhea" id="RHEA:42288"/>
        <dbReference type="Rhea" id="RHEA-COMP:9685"/>
        <dbReference type="Rhea" id="RHEA-COMP:9955"/>
        <dbReference type="ChEBI" id="CHEBI:15378"/>
        <dbReference type="ChEBI" id="CHEBI:16526"/>
        <dbReference type="ChEBI" id="CHEBI:57972"/>
        <dbReference type="ChEBI" id="CHEBI:64479"/>
        <dbReference type="ChEBI" id="CHEBI:78846"/>
        <dbReference type="ChEBI" id="CHEBI:149468"/>
        <dbReference type="EC" id="2.3.1.47"/>
    </reaction>
</comment>
<comment type="cofactor">
    <cofactor evidence="1">
        <name>pyridoxal 5'-phosphate</name>
        <dbReference type="ChEBI" id="CHEBI:597326"/>
    </cofactor>
</comment>
<comment type="pathway">
    <text>Cofactor biosynthesis; biotin biosynthesis.</text>
</comment>
<comment type="subunit">
    <text evidence="1">Homodimer.</text>
</comment>
<comment type="similarity">
    <text evidence="2">Belongs to the class-II pyridoxal-phosphate-dependent aminotransferase family. BioF subfamily.</text>
</comment>
<organism>
    <name type="scientific">Bacillus cereus (strain ATCC 10987 / NRS 248)</name>
    <dbReference type="NCBI Taxonomy" id="222523"/>
    <lineage>
        <taxon>Bacteria</taxon>
        <taxon>Bacillati</taxon>
        <taxon>Bacillota</taxon>
        <taxon>Bacilli</taxon>
        <taxon>Bacillales</taxon>
        <taxon>Bacillaceae</taxon>
        <taxon>Bacillus</taxon>
        <taxon>Bacillus cereus group</taxon>
    </lineage>
</organism>
<keyword id="KW-0093">Biotin biosynthesis</keyword>
<keyword id="KW-0663">Pyridoxal phosphate</keyword>
<keyword id="KW-0808">Transferase</keyword>
<accession>Q731H9</accession>
<proteinExistence type="inferred from homology"/>
<dbReference type="EC" id="2.3.1.47"/>
<dbReference type="EMBL" id="AE017194">
    <property type="protein sequence ID" value="AAS43088.1"/>
    <property type="molecule type" value="Genomic_DNA"/>
</dbReference>
<dbReference type="SMR" id="Q731H9"/>
<dbReference type="KEGG" id="bca:BCE_4187"/>
<dbReference type="HOGENOM" id="CLU_015846_11_2_9"/>
<dbReference type="UniPathway" id="UPA00078"/>
<dbReference type="Proteomes" id="UP000002527">
    <property type="component" value="Chromosome"/>
</dbReference>
<dbReference type="GO" id="GO:0008710">
    <property type="term" value="F:8-amino-7-oxononanoate synthase activity"/>
    <property type="evidence" value="ECO:0007669"/>
    <property type="project" value="UniProtKB-EC"/>
</dbReference>
<dbReference type="GO" id="GO:0030170">
    <property type="term" value="F:pyridoxal phosphate binding"/>
    <property type="evidence" value="ECO:0007669"/>
    <property type="project" value="InterPro"/>
</dbReference>
<dbReference type="GO" id="GO:0009102">
    <property type="term" value="P:biotin biosynthetic process"/>
    <property type="evidence" value="ECO:0007669"/>
    <property type="project" value="UniProtKB-UniPathway"/>
</dbReference>
<dbReference type="CDD" id="cd06454">
    <property type="entry name" value="KBL_like"/>
    <property type="match status" value="1"/>
</dbReference>
<dbReference type="FunFam" id="3.40.640.10:FF:000006">
    <property type="entry name" value="5-aminolevulinate synthase, mitochondrial"/>
    <property type="match status" value="1"/>
</dbReference>
<dbReference type="Gene3D" id="3.90.1150.10">
    <property type="entry name" value="Aspartate Aminotransferase, domain 1"/>
    <property type="match status" value="1"/>
</dbReference>
<dbReference type="Gene3D" id="3.40.640.10">
    <property type="entry name" value="Type I PLP-dependent aspartate aminotransferase-like (Major domain)"/>
    <property type="match status" value="1"/>
</dbReference>
<dbReference type="InterPro" id="IPR001917">
    <property type="entry name" value="Aminotrans_II_pyridoxalP_BS"/>
</dbReference>
<dbReference type="InterPro" id="IPR004839">
    <property type="entry name" value="Aminotransferase_I/II_large"/>
</dbReference>
<dbReference type="InterPro" id="IPR050087">
    <property type="entry name" value="AON_synthase_class-II"/>
</dbReference>
<dbReference type="InterPro" id="IPR004723">
    <property type="entry name" value="AONS_Archaea/Proteobacteria"/>
</dbReference>
<dbReference type="InterPro" id="IPR015424">
    <property type="entry name" value="PyrdxlP-dep_Trfase"/>
</dbReference>
<dbReference type="InterPro" id="IPR015421">
    <property type="entry name" value="PyrdxlP-dep_Trfase_major"/>
</dbReference>
<dbReference type="InterPro" id="IPR015422">
    <property type="entry name" value="PyrdxlP-dep_Trfase_small"/>
</dbReference>
<dbReference type="NCBIfam" id="TIGR00858">
    <property type="entry name" value="bioF"/>
    <property type="match status" value="1"/>
</dbReference>
<dbReference type="PANTHER" id="PTHR13693:SF100">
    <property type="entry name" value="8-AMINO-7-OXONONANOATE SYNTHASE"/>
    <property type="match status" value="1"/>
</dbReference>
<dbReference type="PANTHER" id="PTHR13693">
    <property type="entry name" value="CLASS II AMINOTRANSFERASE/8-AMINO-7-OXONONANOATE SYNTHASE"/>
    <property type="match status" value="1"/>
</dbReference>
<dbReference type="Pfam" id="PF00155">
    <property type="entry name" value="Aminotran_1_2"/>
    <property type="match status" value="1"/>
</dbReference>
<dbReference type="SUPFAM" id="SSF53383">
    <property type="entry name" value="PLP-dependent transferases"/>
    <property type="match status" value="1"/>
</dbReference>
<dbReference type="PROSITE" id="PS00599">
    <property type="entry name" value="AA_TRANSFER_CLASS_2"/>
    <property type="match status" value="1"/>
</dbReference>
<name>BIOF_BACC1</name>